<organism>
    <name type="scientific">Shigella flexneri serotype 5a (strain M90T)</name>
    <dbReference type="NCBI Taxonomy" id="1086030"/>
    <lineage>
        <taxon>Bacteria</taxon>
        <taxon>Pseudomonadati</taxon>
        <taxon>Pseudomonadota</taxon>
        <taxon>Gammaproteobacteria</taxon>
        <taxon>Enterobacterales</taxon>
        <taxon>Enterobacteriaceae</taxon>
        <taxon>Shigella</taxon>
    </lineage>
</organism>
<protein>
    <recommendedName>
        <fullName evidence="4">Outer membrane porin C 1</fullName>
    </recommendedName>
    <alternativeName>
        <fullName>Outer membrane protein C 1</fullName>
    </alternativeName>
    <alternativeName>
        <fullName>Porin OmpC1</fullName>
    </alternativeName>
</protein>
<feature type="signal peptide" evidence="2">
    <location>
        <begin position="1"/>
        <end position="21"/>
    </location>
</feature>
<feature type="chain" id="PRO_5020643036" description="Outer membrane porin C 1" evidence="2">
    <location>
        <begin position="22"/>
        <end position="373"/>
    </location>
</feature>
<reference key="1">
    <citation type="submission" date="2019-03" db="EMBL/GenBank/DDBJ databases">
        <title>Complete genome sequence and annotation of the laboratory reference strain Shigella flexneri 5a M90T and genome-wide transcription start site determination.</title>
        <authorList>
            <person name="Cervantes-Rivera R."/>
            <person name="Puhar A."/>
        </authorList>
    </citation>
    <scope>NUCLEOTIDE SEQUENCE [LARGE SCALE GENOMIC DNA]</scope>
    <source>
        <strain>M90T / Serotype 5a</strain>
    </source>
</reference>
<reference key="2">
    <citation type="journal article" date="1993" name="Infect. Immun.">
        <title>OmpC is involved in invasion of epithelial cells by Shigella flexneri.</title>
        <authorList>
            <person name="Bernardini M.L."/>
            <person name="Sanna M.G."/>
            <person name="Fontaine A."/>
            <person name="Sansonetti P.J."/>
        </authorList>
    </citation>
    <scope>FUNCTION IN VIRULENCE</scope>
    <scope>SUBCELLULAR LOCATION</scope>
    <scope>INDUCTION</scope>
    <scope>DISRUPTION PHENOTYPE</scope>
    <source>
        <strain>M90T / Serotype 5a</strain>
    </source>
</reference>
<proteinExistence type="evidence at protein level"/>
<evidence type="ECO:0000250" key="1">
    <source>
        <dbReference type="UniProtKB" id="P06996"/>
    </source>
</evidence>
<evidence type="ECO:0000255" key="2"/>
<evidence type="ECO:0000269" key="3">
    <source>
    </source>
</evidence>
<evidence type="ECO:0000305" key="4"/>
<sequence>MKVKVLSLLVPALLVAGAANAAEVYNKDGNKLDLYGKVDGLHYFSDDKSVDGDQTYMRLGFKGETQVTDQLTGYGQWEYQIQGNSAENENNSWTRVAFAGLKFQDVGSFDYGRNYGVVYDVTSWTDVLPEFGGDTYGSDNFMQQRGNGFATYRSTDFFGLVDGLNFAVQYQGKNGSPEGEGMTNNGREALRQNGDGVGGSITYDYEGFGIGAAVSSSKRTDDQNFGLNRYDERYIGNGDRAETYTGGLKYDANNIYLAAQYTQTYNATRVGNLGWANKAQNFEAVAQYQFDFGLRPSLAYLQSKGKNLGVINGRNYDDEDILKYVDVGATYYFNKNMSTYVDYKINLLDDNQFTRDAGINTDNIVALGLVYQF</sequence>
<keyword id="KW-0998">Cell outer membrane</keyword>
<keyword id="KW-0406">Ion transport</keyword>
<keyword id="KW-0472">Membrane</keyword>
<keyword id="KW-0626">Porin</keyword>
<keyword id="KW-0732">Signal</keyword>
<keyword id="KW-0812">Transmembrane</keyword>
<keyword id="KW-1134">Transmembrane beta strand</keyword>
<keyword id="KW-0813">Transport</keyword>
<keyword id="KW-0843">Virulence</keyword>
<accession>A0A4P7TKC8</accession>
<name>OMPC1_SHIFM</name>
<comment type="function">
    <text evidence="3 4">Forms pores that allow passive diffusion of small molecules across the outer membrane (Probable). Plays a role in virulence (PubMed:8359885).</text>
</comment>
<comment type="subunit">
    <text evidence="1">Homotrimer. Forms mixed heterotrimers with OmpF and with PhoE; other mixed heterotrimers are also probable.</text>
</comment>
<comment type="subcellular location">
    <subcellularLocation>
        <location evidence="3">Cell outer membrane</location>
        <topology evidence="1">Multi-pass membrane protein</topology>
    </subcellularLocation>
</comment>
<comment type="induction">
    <text evidence="3">Unlike E.coli, constitutively expressed at low and high osmolarity (0.3M NaCl) (at protein level). Expression is under the control of OmpR-EnvZ two-component system; still expressed at very low levels in high osmolarity in the absence of ompR-envZ (at protein elevel).</text>
</comment>
<comment type="disruption phenotype">
    <text evidence="3">Lowered rate of infection of HeLa cells. Bacteria are seriously impaired in their ability to spread from host cell to host cell.</text>
</comment>
<comment type="miscellaneous">
    <text evidence="4">This strain has 2 ompC genes; it is not clear which one has been detected in cell outer membranes nor deleted in PubMed:8359885.</text>
</comment>
<comment type="similarity">
    <text evidence="4">Belongs to the Gram-negative porin family.</text>
</comment>
<dbReference type="EMBL" id="CP037923">
    <property type="protein sequence ID" value="QCC31083.1"/>
    <property type="molecule type" value="Genomic_DNA"/>
</dbReference>
<dbReference type="SMR" id="A0A4P7TKC8"/>
<dbReference type="Proteomes" id="UP000296678">
    <property type="component" value="Chromosome"/>
</dbReference>
<dbReference type="GO" id="GO:0009279">
    <property type="term" value="C:cell outer membrane"/>
    <property type="evidence" value="ECO:0007669"/>
    <property type="project" value="UniProtKB-SubCell"/>
</dbReference>
<dbReference type="GO" id="GO:0046930">
    <property type="term" value="C:pore complex"/>
    <property type="evidence" value="ECO:0007669"/>
    <property type="project" value="UniProtKB-KW"/>
</dbReference>
<dbReference type="GO" id="GO:0015288">
    <property type="term" value="F:porin activity"/>
    <property type="evidence" value="ECO:0007669"/>
    <property type="project" value="UniProtKB-KW"/>
</dbReference>
<dbReference type="GO" id="GO:0034220">
    <property type="term" value="P:monoatomic ion transmembrane transport"/>
    <property type="evidence" value="ECO:0007669"/>
    <property type="project" value="InterPro"/>
</dbReference>
<dbReference type="FunFam" id="2.40.160.10:FF:000002">
    <property type="entry name" value="Outer membrane porin F"/>
    <property type="match status" value="1"/>
</dbReference>
<dbReference type="Gene3D" id="2.40.160.10">
    <property type="entry name" value="Porin"/>
    <property type="match status" value="1"/>
</dbReference>
<dbReference type="InterPro" id="IPR050298">
    <property type="entry name" value="Gram-neg_bact_OMP"/>
</dbReference>
<dbReference type="InterPro" id="IPR023614">
    <property type="entry name" value="Porin_dom_sf"/>
</dbReference>
<dbReference type="InterPro" id="IPR001897">
    <property type="entry name" value="Porin_gammaproteobac"/>
</dbReference>
<dbReference type="InterPro" id="IPR001702">
    <property type="entry name" value="Porin_Gram-ve"/>
</dbReference>
<dbReference type="InterPro" id="IPR013793">
    <property type="entry name" value="Porin_Gram-ve_CS"/>
</dbReference>
<dbReference type="NCBIfam" id="NF007841">
    <property type="entry name" value="PRK10554.1"/>
    <property type="match status" value="1"/>
</dbReference>
<dbReference type="PANTHER" id="PTHR34501:SF1">
    <property type="entry name" value="OUTER MEMBRANE PORIN C"/>
    <property type="match status" value="1"/>
</dbReference>
<dbReference type="PANTHER" id="PTHR34501">
    <property type="entry name" value="PROTEIN YDDL-RELATED"/>
    <property type="match status" value="1"/>
</dbReference>
<dbReference type="Pfam" id="PF00267">
    <property type="entry name" value="Porin_1"/>
    <property type="match status" value="1"/>
</dbReference>
<dbReference type="PRINTS" id="PR00183">
    <property type="entry name" value="ECOLIPORIN"/>
</dbReference>
<dbReference type="PRINTS" id="PR00182">
    <property type="entry name" value="ECOLNEIPORIN"/>
</dbReference>
<dbReference type="SUPFAM" id="SSF56935">
    <property type="entry name" value="Porins"/>
    <property type="match status" value="1"/>
</dbReference>
<dbReference type="PROSITE" id="PS00576">
    <property type="entry name" value="GRAM_NEG_PORIN"/>
    <property type="match status" value="1"/>
</dbReference>
<gene>
    <name evidence="4" type="primary">ompC1</name>
    <name type="ORF">EKN05_004405</name>
</gene>